<dbReference type="EC" id="2.5.1.108" evidence="2"/>
<dbReference type="EMBL" id="CP017624">
    <property type="protein sequence ID" value="AOW27595.1"/>
    <property type="molecule type" value="Genomic_DNA"/>
</dbReference>
<dbReference type="RefSeq" id="XP_710915.2">
    <property type="nucleotide sequence ID" value="XM_705823.2"/>
</dbReference>
<dbReference type="SMR" id="Q59MG1"/>
<dbReference type="FunCoup" id="Q59MG1">
    <property type="interactions" value="660"/>
</dbReference>
<dbReference type="STRING" id="237561.Q59MG1"/>
<dbReference type="EnsemblFungi" id="C2_05840W_A-T">
    <property type="protein sequence ID" value="C2_05840W_A-T-p1"/>
    <property type="gene ID" value="C2_05840W_A"/>
</dbReference>
<dbReference type="GeneID" id="3647484"/>
<dbReference type="KEGG" id="cal:CAALFM_C205840WA"/>
<dbReference type="CGD" id="CAL0000187558">
    <property type="gene designation" value="orf19.12674"/>
</dbReference>
<dbReference type="VEuPathDB" id="FungiDB:C2_05840W_A"/>
<dbReference type="eggNOG" id="KOG2648">
    <property type="taxonomic scope" value="Eukaryota"/>
</dbReference>
<dbReference type="HOGENOM" id="CLU_112098_0_0_1"/>
<dbReference type="InParanoid" id="Q59MG1"/>
<dbReference type="OMA" id="PGQVLGC"/>
<dbReference type="OrthoDB" id="1649088at2759"/>
<dbReference type="UniPathway" id="UPA00559"/>
<dbReference type="PRO" id="PR:Q59MG1"/>
<dbReference type="Proteomes" id="UP000000559">
    <property type="component" value="Chromosome 2"/>
</dbReference>
<dbReference type="GO" id="GO:0120513">
    <property type="term" value="C:2-(3-amino-3-carboxypropyl)histidine synthase complex"/>
    <property type="evidence" value="ECO:0000250"/>
    <property type="project" value="UniProtKB"/>
</dbReference>
<dbReference type="GO" id="GO:0005737">
    <property type="term" value="C:cytoplasm"/>
    <property type="evidence" value="ECO:0007669"/>
    <property type="project" value="UniProtKB-SubCell"/>
</dbReference>
<dbReference type="GO" id="GO:0090560">
    <property type="term" value="F:2-(3-amino-3-carboxypropyl)histidine synthase activity"/>
    <property type="evidence" value="ECO:0007669"/>
    <property type="project" value="UniProtKB-EC"/>
</dbReference>
<dbReference type="GO" id="GO:0051539">
    <property type="term" value="F:4 iron, 4 sulfur cluster binding"/>
    <property type="evidence" value="ECO:0000250"/>
    <property type="project" value="UniProtKB"/>
</dbReference>
<dbReference type="GO" id="GO:0046872">
    <property type="term" value="F:metal ion binding"/>
    <property type="evidence" value="ECO:0007669"/>
    <property type="project" value="UniProtKB-KW"/>
</dbReference>
<dbReference type="GO" id="GO:0017183">
    <property type="term" value="P:protein histidyl modification to diphthamide"/>
    <property type="evidence" value="ECO:0000250"/>
    <property type="project" value="UniProtKB"/>
</dbReference>
<dbReference type="FunFam" id="3.40.50.11840:FF:000001">
    <property type="entry name" value="2-(3-amino-3-carboxypropyl)histidine synthase subunit 1"/>
    <property type="match status" value="1"/>
</dbReference>
<dbReference type="FunFam" id="3.40.50.11850:FF:000001">
    <property type="entry name" value="2-(3-amino-3-carboxypropyl)histidine synthase subunit 1"/>
    <property type="match status" value="1"/>
</dbReference>
<dbReference type="FunFam" id="3.40.50.11860:FF:000002">
    <property type="entry name" value="2-(3-amino-3-carboxypropyl)histidine synthase subunit 1"/>
    <property type="match status" value="1"/>
</dbReference>
<dbReference type="Gene3D" id="3.40.50.11840">
    <property type="entry name" value="Diphthamide synthesis DPH1/DPH2 domain 1"/>
    <property type="match status" value="1"/>
</dbReference>
<dbReference type="Gene3D" id="3.40.50.11850">
    <property type="entry name" value="Diphthamide synthesis DPH1/DPH2 domain 2"/>
    <property type="match status" value="1"/>
</dbReference>
<dbReference type="Gene3D" id="3.40.50.11860">
    <property type="entry name" value="Diphthamide synthesis DPH1/DPH2 domain 3"/>
    <property type="match status" value="1"/>
</dbReference>
<dbReference type="InterPro" id="IPR016435">
    <property type="entry name" value="DPH1/DPH2"/>
</dbReference>
<dbReference type="InterPro" id="IPR042263">
    <property type="entry name" value="DPH1/DPH2_1"/>
</dbReference>
<dbReference type="InterPro" id="IPR042264">
    <property type="entry name" value="DPH1/DPH2_2"/>
</dbReference>
<dbReference type="InterPro" id="IPR042265">
    <property type="entry name" value="DPH1/DPH2_3"/>
</dbReference>
<dbReference type="InterPro" id="IPR035435">
    <property type="entry name" value="DPH1/DPH2_euk_archaea"/>
</dbReference>
<dbReference type="NCBIfam" id="TIGR00322">
    <property type="entry name" value="diphth2_R"/>
    <property type="match status" value="1"/>
</dbReference>
<dbReference type="PANTHER" id="PTHR10762:SF1">
    <property type="entry name" value="2-(3-AMINO-3-CARBOXYPROPYL)HISTIDINE SYNTHASE SUBUNIT 1"/>
    <property type="match status" value="1"/>
</dbReference>
<dbReference type="PANTHER" id="PTHR10762">
    <property type="entry name" value="DIPHTHAMIDE BIOSYNTHESIS PROTEIN"/>
    <property type="match status" value="1"/>
</dbReference>
<dbReference type="Pfam" id="PF01866">
    <property type="entry name" value="Diphthamide_syn"/>
    <property type="match status" value="1"/>
</dbReference>
<dbReference type="PIRSF" id="PIRSF004967">
    <property type="entry name" value="DPH1"/>
    <property type="match status" value="1"/>
</dbReference>
<dbReference type="SFLD" id="SFLDG01121">
    <property type="entry name" value="Diphthamide_biosynthesis"/>
    <property type="match status" value="1"/>
</dbReference>
<dbReference type="SFLD" id="SFLDS00032">
    <property type="entry name" value="Radical_SAM_3-amino-3-carboxyp"/>
    <property type="match status" value="1"/>
</dbReference>
<proteinExistence type="inferred from homology"/>
<feature type="chain" id="PRO_0000083369" description="2-(3-amino-3-carboxypropyl)histidine synthase subunit 1">
    <location>
        <begin position="1"/>
        <end position="426"/>
    </location>
</feature>
<feature type="binding site" evidence="1">
    <location>
        <position position="132"/>
    </location>
    <ligand>
        <name>[4Fe-4S] cluster</name>
        <dbReference type="ChEBI" id="CHEBI:49883"/>
    </ligand>
</feature>
<feature type="binding site" evidence="1">
    <location>
        <position position="238"/>
    </location>
    <ligand>
        <name>[4Fe-4S] cluster</name>
        <dbReference type="ChEBI" id="CHEBI:49883"/>
    </ligand>
</feature>
<feature type="binding site" evidence="1">
    <location>
        <position position="367"/>
    </location>
    <ligand>
        <name>[4Fe-4S] cluster</name>
        <dbReference type="ChEBI" id="CHEBI:49883"/>
    </ligand>
</feature>
<protein>
    <recommendedName>
        <fullName evidence="3">2-(3-amino-3-carboxypropyl)histidine synthase subunit 1</fullName>
        <ecNumber evidence="2">2.5.1.108</ecNumber>
    </recommendedName>
    <alternativeName>
        <fullName>Diphthamide biosynthesis protein 1</fullName>
    </alternativeName>
    <alternativeName>
        <fullName evidence="3">Diphtheria toxin resistance protein 1</fullName>
    </alternativeName>
    <alternativeName>
        <fullName evidence="3">S-adenosyl-L-methionine:L-histidine 3-amino-3-carboxypropyltransferase 1</fullName>
    </alternativeName>
</protein>
<comment type="function">
    <text evidence="2">Catalyzes the first step of diphthamide biosynthesis, a post-translational modification of histidine which occurs in elongation factor 2. DPH1 and DPH2 transfer a 3-amino-3-carboxypropyl (ACP) group from S-adenosyl-L-methionine (SAM) to a histidine residue, the reaction is assisted by a reduction system comprising DPH3 and a NADH-dependent reductase, predominantly CBR1.</text>
</comment>
<comment type="catalytic activity">
    <reaction evidence="2">
        <text>L-histidyl-[translation elongation factor 2] + S-adenosyl-L-methionine = 2-[(3S)-amino-3-carboxypropyl]-L-histidyl-[translation elongation factor 2] + S-methyl-5'-thioadenosine + H(+)</text>
        <dbReference type="Rhea" id="RHEA:36783"/>
        <dbReference type="Rhea" id="RHEA-COMP:9748"/>
        <dbReference type="Rhea" id="RHEA-COMP:9749"/>
        <dbReference type="ChEBI" id="CHEBI:15378"/>
        <dbReference type="ChEBI" id="CHEBI:17509"/>
        <dbReference type="ChEBI" id="CHEBI:29979"/>
        <dbReference type="ChEBI" id="CHEBI:59789"/>
        <dbReference type="ChEBI" id="CHEBI:73995"/>
        <dbReference type="EC" id="2.5.1.108"/>
    </reaction>
</comment>
<comment type="cofactor">
    <cofactor evidence="2">
        <name>[4Fe-4S] cluster</name>
        <dbReference type="ChEBI" id="CHEBI:49883"/>
    </cofactor>
    <text evidence="2">Binds 1 [4Fe-4S] cluster per subunit. The cluster is coordinated with 3 cysteines and an exchangeable S-adenosyl-L-methionine.</text>
</comment>
<comment type="pathway">
    <text>Protein modification; peptidyl-diphthamide biosynthesis.</text>
</comment>
<comment type="subunit">
    <text evidence="2">Component of the 2-(3-amino-3-carboxypropyl)histidine synthase complex composed of DPH1, DPH2, DPH3 and a NADH-dependent reductase, predominantly CBR1.</text>
</comment>
<comment type="subcellular location">
    <subcellularLocation>
        <location evidence="2">Cytoplasm</location>
    </subcellularLocation>
</comment>
<comment type="similarity">
    <text evidence="3">Belongs to the DPH1/DPH2 family. DPH1 subfamily.</text>
</comment>
<accession>Q59MG1</accession>
<accession>A0A1D8PHJ2</accession>
<accession>Q59MG0</accession>
<keyword id="KW-0963">Cytoplasm</keyword>
<keyword id="KW-0408">Iron</keyword>
<keyword id="KW-0411">Iron-sulfur</keyword>
<keyword id="KW-0479">Metal-binding</keyword>
<keyword id="KW-1185">Reference proteome</keyword>
<keyword id="KW-0949">S-adenosyl-L-methionine</keyword>
<keyword id="KW-0808">Transferase</keyword>
<reference key="1">
    <citation type="journal article" date="2004" name="Proc. Natl. Acad. Sci. U.S.A.">
        <title>The diploid genome sequence of Candida albicans.</title>
        <authorList>
            <person name="Jones T."/>
            <person name="Federspiel N.A."/>
            <person name="Chibana H."/>
            <person name="Dungan J."/>
            <person name="Kalman S."/>
            <person name="Magee B.B."/>
            <person name="Newport G."/>
            <person name="Thorstenson Y.R."/>
            <person name="Agabian N."/>
            <person name="Magee P.T."/>
            <person name="Davis R.W."/>
            <person name="Scherer S."/>
        </authorList>
    </citation>
    <scope>NUCLEOTIDE SEQUENCE [LARGE SCALE GENOMIC DNA]</scope>
    <source>
        <strain>SC5314 / ATCC MYA-2876</strain>
    </source>
</reference>
<reference key="2">
    <citation type="journal article" date="2007" name="Genome Biol.">
        <title>Assembly of the Candida albicans genome into sixteen supercontigs aligned on the eight chromosomes.</title>
        <authorList>
            <person name="van het Hoog M."/>
            <person name="Rast T.J."/>
            <person name="Martchenko M."/>
            <person name="Grindle S."/>
            <person name="Dignard D."/>
            <person name="Hogues H."/>
            <person name="Cuomo C."/>
            <person name="Berriman M."/>
            <person name="Scherer S."/>
            <person name="Magee B.B."/>
            <person name="Whiteway M."/>
            <person name="Chibana H."/>
            <person name="Nantel A."/>
            <person name="Magee P.T."/>
        </authorList>
    </citation>
    <scope>GENOME REANNOTATION</scope>
    <source>
        <strain>SC5314 / ATCC MYA-2876</strain>
    </source>
</reference>
<reference key="3">
    <citation type="journal article" date="2013" name="Genome Biol.">
        <title>Assembly of a phased diploid Candida albicans genome facilitates allele-specific measurements and provides a simple model for repeat and indel structure.</title>
        <authorList>
            <person name="Muzzey D."/>
            <person name="Schwartz K."/>
            <person name="Weissman J.S."/>
            <person name="Sherlock G."/>
        </authorList>
    </citation>
    <scope>NUCLEOTIDE SEQUENCE [LARGE SCALE GENOMIC DNA]</scope>
    <scope>GENOME REANNOTATION</scope>
    <source>
        <strain>SC5314 / ATCC MYA-2876</strain>
    </source>
</reference>
<gene>
    <name type="primary">DPH1</name>
    <name type="ordered locus">CAALFM_C205840WA</name>
    <name type="ORF">CaO19.12674/12675</name>
    <name type="ORF">CaO19.5207/5208</name>
</gene>
<name>DPH1_CANAL</name>
<organism>
    <name type="scientific">Candida albicans (strain SC5314 / ATCC MYA-2876)</name>
    <name type="common">Yeast</name>
    <dbReference type="NCBI Taxonomy" id="237561"/>
    <lineage>
        <taxon>Eukaryota</taxon>
        <taxon>Fungi</taxon>
        <taxon>Dikarya</taxon>
        <taxon>Ascomycota</taxon>
        <taxon>Saccharomycotina</taxon>
        <taxon>Pichiomycetes</taxon>
        <taxon>Debaryomycetaceae</taxon>
        <taxon>Candida/Lodderomyces clade</taxon>
        <taxon>Candida</taxon>
    </lineage>
</organism>
<sequence>MSPVEKPVEVEKPKVPKRRFVGKKPQNITIKDGEQPLTKTINPARHIGRVMNQIPDDILNDKELNEAIKLLPSNYNFEIHKTIWNIRKTNCKRVALQMPEGLLIYSLIISDILEQFCQVETIVMGDVSYGACCIDDYTARSLDCDFIVHYAHSCLVPIDITSIKVLYVFVTINIDETHLINTIKLNFERGTQIAIFGTIQFNPTIHSVKAKLENDTEKPMYLIPPQTRPLSKGEVLGCTSARLDKEHIKAMIYIGDGRFHLESSMIHNPEIPAYRYDPYSRKFTREYYDHKQMIDVRKDAISTTKYATKVGLILGALGRQGNPITLDKLEKSLSEKGIQVVKIILSEILPQKLAMFDDVDAFVQVACPRLSIDWGYAFNKPLLTPYEAMVMLEKDTMGDEKVYPMDYYSKDGYGRGSIPDHSHLTT</sequence>
<evidence type="ECO:0000250" key="1">
    <source>
        <dbReference type="UniProtKB" id="O58832"/>
    </source>
</evidence>
<evidence type="ECO:0000250" key="2">
    <source>
        <dbReference type="UniProtKB" id="P40487"/>
    </source>
</evidence>
<evidence type="ECO:0000305" key="3"/>